<proteinExistence type="inferred from homology"/>
<feature type="chain" id="PRO_0000225958" description="Chaperone protein DnaK">
    <location>
        <begin position="1"/>
        <end position="633"/>
    </location>
</feature>
<feature type="region of interest" description="Disordered" evidence="2">
    <location>
        <begin position="599"/>
        <end position="633"/>
    </location>
</feature>
<feature type="compositionally biased region" description="Acidic residues" evidence="2">
    <location>
        <begin position="622"/>
        <end position="633"/>
    </location>
</feature>
<feature type="modified residue" description="Phosphothreonine; by autocatalysis" evidence="1">
    <location>
        <position position="198"/>
    </location>
</feature>
<comment type="function">
    <text evidence="1">Acts as a chaperone.</text>
</comment>
<comment type="induction">
    <text evidence="1">By stress conditions e.g. heat shock.</text>
</comment>
<comment type="similarity">
    <text evidence="1">Belongs to the heat shock protein 70 family.</text>
</comment>
<gene>
    <name evidence="1" type="primary">dnaK</name>
    <name type="ordered locus">DP1643</name>
</gene>
<name>DNAK_DESPS</name>
<sequence length="633" mass="68122">MGKIIGIDLGTTNSCVSVMEGGEPKVIANVEGNRTTPSVVAFADNDERLVGMIAKRQAVTNPERTVYAAKRLIGRKFTDAEVQRSQEVSPFDIVEGISGSVAIQVEGHKYRPAEISAMVLGKMKQTAEEYLGEEVTEAVVTVPAYFNDSQRQATKDAGKIAGLDVKRIINEPTAASLAYGLDKKVEEKIAVFDLGGGTFDVSVLEIGDGVFEVKSTNGDTFLGGEDFDMRIVHWLADEFKREQGIDLRSDKMALQRLKEEAEKAKMELSTTVETDINLPFITADASGPKHLNIKLSRSKFETLVEDLVERTVGPCKTALKDAGLSASQIDEVILVGGMSRMPMVQKKVVEIFGKEPHKGVNPDEVVAIGAAIQGGVLQGDVKDVLLLDVTPLSLGIETLGGVTTKLIEKNTTVPTKKSQVFSTAADNQPAVSIHVLQGEREMAEGNKTIGRFELADIPTAPRGVPQIEVTFDLDANGILNVSAKDMGTGKEQSIKITASSGLTDEEIDRMTKDAELHADEDKKRKELVEARNSADGLIHSTEKTLKDLGDKVDAETKENVEKEIANVKTALEGDDVEAIKAAIEALTAASHKLAELMYQQASQETPGDGDAGAAGAKKKDDDDVVDADYEEVK</sequence>
<reference key="1">
    <citation type="journal article" date="2004" name="Environ. Microbiol.">
        <title>The genome of Desulfotalea psychrophila, a sulfate-reducing bacterium from permanently cold Arctic sediments.</title>
        <authorList>
            <person name="Rabus R."/>
            <person name="Ruepp A."/>
            <person name="Frickey T."/>
            <person name="Rattei T."/>
            <person name="Fartmann B."/>
            <person name="Stark M."/>
            <person name="Bauer M."/>
            <person name="Zibat A."/>
            <person name="Lombardot T."/>
            <person name="Becker I."/>
            <person name="Amann J."/>
            <person name="Gellner K."/>
            <person name="Teeling H."/>
            <person name="Leuschner W.D."/>
            <person name="Gloeckner F.-O."/>
            <person name="Lupas A.N."/>
            <person name="Amann R."/>
            <person name="Klenk H.-P."/>
        </authorList>
    </citation>
    <scope>NUCLEOTIDE SEQUENCE [LARGE SCALE GENOMIC DNA]</scope>
    <source>
        <strain>DSM 12343 / LSv54</strain>
    </source>
</reference>
<dbReference type="EMBL" id="CR522870">
    <property type="protein sequence ID" value="CAG36372.1"/>
    <property type="molecule type" value="Genomic_DNA"/>
</dbReference>
<dbReference type="RefSeq" id="WP_011188884.1">
    <property type="nucleotide sequence ID" value="NC_006138.1"/>
</dbReference>
<dbReference type="SMR" id="Q6AMQ3"/>
<dbReference type="STRING" id="177439.DP1643"/>
<dbReference type="KEGG" id="dps:DP1643"/>
<dbReference type="eggNOG" id="COG0443">
    <property type="taxonomic scope" value="Bacteria"/>
</dbReference>
<dbReference type="HOGENOM" id="CLU_005965_2_1_7"/>
<dbReference type="OrthoDB" id="9766019at2"/>
<dbReference type="Proteomes" id="UP000000602">
    <property type="component" value="Chromosome"/>
</dbReference>
<dbReference type="GO" id="GO:0005524">
    <property type="term" value="F:ATP binding"/>
    <property type="evidence" value="ECO:0007669"/>
    <property type="project" value="UniProtKB-UniRule"/>
</dbReference>
<dbReference type="GO" id="GO:0140662">
    <property type="term" value="F:ATP-dependent protein folding chaperone"/>
    <property type="evidence" value="ECO:0007669"/>
    <property type="project" value="InterPro"/>
</dbReference>
<dbReference type="GO" id="GO:0051082">
    <property type="term" value="F:unfolded protein binding"/>
    <property type="evidence" value="ECO:0007669"/>
    <property type="project" value="InterPro"/>
</dbReference>
<dbReference type="CDD" id="cd10234">
    <property type="entry name" value="ASKHA_NBD_HSP70_DnaK-like"/>
    <property type="match status" value="1"/>
</dbReference>
<dbReference type="FunFam" id="2.60.34.10:FF:000014">
    <property type="entry name" value="Chaperone protein DnaK HSP70"/>
    <property type="match status" value="1"/>
</dbReference>
<dbReference type="FunFam" id="3.30.30.30:FF:000005">
    <property type="entry name" value="Heat shock protein ssb1"/>
    <property type="match status" value="1"/>
</dbReference>
<dbReference type="FunFam" id="1.20.1270.10:FF:000001">
    <property type="entry name" value="Molecular chaperone DnaK"/>
    <property type="match status" value="1"/>
</dbReference>
<dbReference type="FunFam" id="3.30.420.40:FF:000004">
    <property type="entry name" value="Molecular chaperone DnaK"/>
    <property type="match status" value="1"/>
</dbReference>
<dbReference type="FunFam" id="3.90.640.10:FF:000003">
    <property type="entry name" value="Molecular chaperone DnaK"/>
    <property type="match status" value="1"/>
</dbReference>
<dbReference type="Gene3D" id="1.20.1270.10">
    <property type="match status" value="1"/>
</dbReference>
<dbReference type="Gene3D" id="3.30.420.40">
    <property type="match status" value="2"/>
</dbReference>
<dbReference type="Gene3D" id="3.90.640.10">
    <property type="entry name" value="Actin, Chain A, domain 4"/>
    <property type="match status" value="1"/>
</dbReference>
<dbReference type="Gene3D" id="2.60.34.10">
    <property type="entry name" value="Substrate Binding Domain Of DNAk, Chain A, domain 1"/>
    <property type="match status" value="1"/>
</dbReference>
<dbReference type="HAMAP" id="MF_00332">
    <property type="entry name" value="DnaK"/>
    <property type="match status" value="1"/>
</dbReference>
<dbReference type="InterPro" id="IPR043129">
    <property type="entry name" value="ATPase_NBD"/>
</dbReference>
<dbReference type="InterPro" id="IPR012725">
    <property type="entry name" value="Chaperone_DnaK"/>
</dbReference>
<dbReference type="InterPro" id="IPR018181">
    <property type="entry name" value="Heat_shock_70_CS"/>
</dbReference>
<dbReference type="InterPro" id="IPR029048">
    <property type="entry name" value="HSP70_C_sf"/>
</dbReference>
<dbReference type="InterPro" id="IPR029047">
    <property type="entry name" value="HSP70_peptide-bd_sf"/>
</dbReference>
<dbReference type="InterPro" id="IPR013126">
    <property type="entry name" value="Hsp_70_fam"/>
</dbReference>
<dbReference type="NCBIfam" id="NF001413">
    <property type="entry name" value="PRK00290.1"/>
    <property type="match status" value="1"/>
</dbReference>
<dbReference type="NCBIfam" id="NF003520">
    <property type="entry name" value="PRK05183.1"/>
    <property type="match status" value="1"/>
</dbReference>
<dbReference type="NCBIfam" id="TIGR02350">
    <property type="entry name" value="prok_dnaK"/>
    <property type="match status" value="1"/>
</dbReference>
<dbReference type="PANTHER" id="PTHR19375">
    <property type="entry name" value="HEAT SHOCK PROTEIN 70KDA"/>
    <property type="match status" value="1"/>
</dbReference>
<dbReference type="Pfam" id="PF00012">
    <property type="entry name" value="HSP70"/>
    <property type="match status" value="1"/>
</dbReference>
<dbReference type="PRINTS" id="PR00301">
    <property type="entry name" value="HEATSHOCK70"/>
</dbReference>
<dbReference type="SUPFAM" id="SSF53067">
    <property type="entry name" value="Actin-like ATPase domain"/>
    <property type="match status" value="2"/>
</dbReference>
<dbReference type="SUPFAM" id="SSF100934">
    <property type="entry name" value="Heat shock protein 70kD (HSP70), C-terminal subdomain"/>
    <property type="match status" value="1"/>
</dbReference>
<dbReference type="SUPFAM" id="SSF100920">
    <property type="entry name" value="Heat shock protein 70kD (HSP70), peptide-binding domain"/>
    <property type="match status" value="1"/>
</dbReference>
<dbReference type="PROSITE" id="PS00297">
    <property type="entry name" value="HSP70_1"/>
    <property type="match status" value="1"/>
</dbReference>
<dbReference type="PROSITE" id="PS00329">
    <property type="entry name" value="HSP70_2"/>
    <property type="match status" value="1"/>
</dbReference>
<dbReference type="PROSITE" id="PS01036">
    <property type="entry name" value="HSP70_3"/>
    <property type="match status" value="1"/>
</dbReference>
<organism>
    <name type="scientific">Desulfotalea psychrophila (strain LSv54 / DSM 12343)</name>
    <dbReference type="NCBI Taxonomy" id="177439"/>
    <lineage>
        <taxon>Bacteria</taxon>
        <taxon>Pseudomonadati</taxon>
        <taxon>Thermodesulfobacteriota</taxon>
        <taxon>Desulfobulbia</taxon>
        <taxon>Desulfobulbales</taxon>
        <taxon>Desulfocapsaceae</taxon>
        <taxon>Desulfotalea</taxon>
    </lineage>
</organism>
<protein>
    <recommendedName>
        <fullName evidence="1">Chaperone protein DnaK</fullName>
    </recommendedName>
    <alternativeName>
        <fullName evidence="1">HSP70</fullName>
    </alternativeName>
    <alternativeName>
        <fullName evidence="1">Heat shock 70 kDa protein</fullName>
    </alternativeName>
    <alternativeName>
        <fullName evidence="1">Heat shock protein 70</fullName>
    </alternativeName>
</protein>
<evidence type="ECO:0000255" key="1">
    <source>
        <dbReference type="HAMAP-Rule" id="MF_00332"/>
    </source>
</evidence>
<evidence type="ECO:0000256" key="2">
    <source>
        <dbReference type="SAM" id="MobiDB-lite"/>
    </source>
</evidence>
<keyword id="KW-0067">ATP-binding</keyword>
<keyword id="KW-0143">Chaperone</keyword>
<keyword id="KW-0547">Nucleotide-binding</keyword>
<keyword id="KW-0597">Phosphoprotein</keyword>
<keyword id="KW-1185">Reference proteome</keyword>
<keyword id="KW-0346">Stress response</keyword>
<accession>Q6AMQ3</accession>